<proteinExistence type="evidence at protein level"/>
<organism>
    <name type="scientific">Mycobacterium tuberculosis (strain ATCC 25618 / H37Rv)</name>
    <dbReference type="NCBI Taxonomy" id="83332"/>
    <lineage>
        <taxon>Bacteria</taxon>
        <taxon>Bacillati</taxon>
        <taxon>Actinomycetota</taxon>
        <taxon>Actinomycetes</taxon>
        <taxon>Mycobacteriales</taxon>
        <taxon>Mycobacteriaceae</taxon>
        <taxon>Mycobacterium</taxon>
        <taxon>Mycobacterium tuberculosis complex</taxon>
    </lineage>
</organism>
<dbReference type="EMBL" id="AL123456">
    <property type="protein sequence ID" value="CCP45620.1"/>
    <property type="molecule type" value="Genomic_DNA"/>
</dbReference>
<dbReference type="PIR" id="G70691">
    <property type="entry name" value="G70691"/>
</dbReference>
<dbReference type="RefSeq" id="NP_217336.1">
    <property type="nucleotide sequence ID" value="NC_000962.3"/>
</dbReference>
<dbReference type="RefSeq" id="WP_003414288.1">
    <property type="nucleotide sequence ID" value="NZ_NVQJ01000006.1"/>
</dbReference>
<dbReference type="SMR" id="P9WJF7"/>
<dbReference type="FunCoup" id="P9WJF7">
    <property type="interactions" value="1"/>
</dbReference>
<dbReference type="STRING" id="83332.Rv2820c"/>
<dbReference type="PaxDb" id="83332-Rv2820c"/>
<dbReference type="DNASU" id="888908"/>
<dbReference type="GeneID" id="888908"/>
<dbReference type="KEGG" id="mtu:Rv2820c"/>
<dbReference type="TubercuList" id="Rv2820c"/>
<dbReference type="eggNOG" id="COG1567">
    <property type="taxonomic scope" value="Bacteria"/>
</dbReference>
<dbReference type="InParanoid" id="P9WJF7"/>
<dbReference type="OrthoDB" id="9792564at2"/>
<dbReference type="Proteomes" id="UP000001584">
    <property type="component" value="Chromosome"/>
</dbReference>
<dbReference type="GO" id="GO:0003723">
    <property type="term" value="F:RNA binding"/>
    <property type="evidence" value="ECO:0007669"/>
    <property type="project" value="UniProtKB-KW"/>
</dbReference>
<dbReference type="GO" id="GO:0051607">
    <property type="term" value="P:defense response to virus"/>
    <property type="evidence" value="ECO:0007669"/>
    <property type="project" value="UniProtKB-KW"/>
</dbReference>
<dbReference type="CDD" id="cd09663">
    <property type="entry name" value="Csm4_III-A"/>
    <property type="match status" value="1"/>
</dbReference>
<dbReference type="InterPro" id="IPR005510">
    <property type="entry name" value="Csm4"/>
</dbReference>
<dbReference type="InterPro" id="IPR040932">
    <property type="entry name" value="Csm4_C"/>
</dbReference>
<dbReference type="NCBIfam" id="TIGR01903">
    <property type="entry name" value="cas5_csm4"/>
    <property type="match status" value="1"/>
</dbReference>
<dbReference type="Pfam" id="PF17953">
    <property type="entry name" value="Csm4_C"/>
    <property type="match status" value="1"/>
</dbReference>
<accession>P9WJF7</accession>
<accession>F2GLB4</accession>
<accession>L0TAR3</accession>
<accession>P71632</accession>
<accession>Q7D6I4</accession>
<sequence>MNSRLFRFDFDRTHFGDHGLESSTISCPADTLYSALCVEALRMGGQQLLGELVACSTLRLTDLLPYVGPDYLVPKPLHSVRSDGSSMQKKLAKKIGFLPAAQLGSFLDGTADLKELAARQTKIGVHAVSAKAAIHNGKKDADPYRVGYFRFELDAGLWLLATGSESELGLLTRLLKGISALGGERTSGFGAFNLTESEAPAALTPTVDAASLMTLTTSLPTDDELEAALAGATYRLVKRSGFVASSTYADMPLRKRDIYKFAAGSVFSRPFQGGILDVSLGGNHPVYSYARPLFLALPESAA</sequence>
<keyword id="KW-0051">Antiviral defense</keyword>
<keyword id="KW-1185">Reference proteome</keyword>
<keyword id="KW-0694">RNA-binding</keyword>
<comment type="function">
    <text evidence="2 4">CRISPR (clustered regularly interspaced short palindromic repeat) is an adaptive immune system that provides protection against mobile genetic elements (viruses, transposable elements and conjugative plasmids). CRISPR clusters contain spacers, sequences complementary to antecedent mobile elements, and target invading nucleic acids. CRISPR clusters are transcribed and processed into CRISPR RNA (crRNA). The type III-A Csm effector complex binds crRNA and acts as a crRNA-guided RNase, DNase and cyclic oligoadenylate synthase; binding of target RNA cognate to the crRNA is required for all activities (Probable). This CRISPR-Cas system protects bacteria against transformation with plasmids containing DNA homologous to its spacer regions (PubMed:29979631).</text>
</comment>
<comment type="function">
    <text evidence="1">The subunit probably binds to the 5' handle of the crRNA, helping in discrimination between self- and non-self.</text>
</comment>
<comment type="subunit">
    <text evidence="2">Part of the Csm effector complex that includes Cas10, Csm2, Csm3, Csm4 and Csm5.</text>
</comment>
<comment type="disruption phenotype">
    <text evidence="2">Deletion of the entire CRISPR-Cas locus (cas6 to cas2, Rv2824c to Rv2816c) decreases resistance to plasmids encoding spacer elements about 6-fold.</text>
</comment>
<comment type="miscellaneous">
    <text evidence="4">Encoded in a type III-A CRISPR locus.</text>
</comment>
<comment type="similarity">
    <text evidence="3">Belongs to the CRISPR-associated Csm4 family.</text>
</comment>
<gene>
    <name type="primary">csm4</name>
    <name type="ordered locus">Rv2820c</name>
</gene>
<reference key="1">
    <citation type="journal article" date="1998" name="Nature">
        <title>Deciphering the biology of Mycobacterium tuberculosis from the complete genome sequence.</title>
        <authorList>
            <person name="Cole S.T."/>
            <person name="Brosch R."/>
            <person name="Parkhill J."/>
            <person name="Garnier T."/>
            <person name="Churcher C.M."/>
            <person name="Harris D.E."/>
            <person name="Gordon S.V."/>
            <person name="Eiglmeier K."/>
            <person name="Gas S."/>
            <person name="Barry C.E. III"/>
            <person name="Tekaia F."/>
            <person name="Badcock K."/>
            <person name="Basham D."/>
            <person name="Brown D."/>
            <person name="Chillingworth T."/>
            <person name="Connor R."/>
            <person name="Davies R.M."/>
            <person name="Devlin K."/>
            <person name="Feltwell T."/>
            <person name="Gentles S."/>
            <person name="Hamlin N."/>
            <person name="Holroyd S."/>
            <person name="Hornsby T."/>
            <person name="Jagels K."/>
            <person name="Krogh A."/>
            <person name="McLean J."/>
            <person name="Moule S."/>
            <person name="Murphy L.D."/>
            <person name="Oliver S."/>
            <person name="Osborne J."/>
            <person name="Quail M.A."/>
            <person name="Rajandream M.A."/>
            <person name="Rogers J."/>
            <person name="Rutter S."/>
            <person name="Seeger K."/>
            <person name="Skelton S."/>
            <person name="Squares S."/>
            <person name="Squares R."/>
            <person name="Sulston J.E."/>
            <person name="Taylor K."/>
            <person name="Whitehead S."/>
            <person name="Barrell B.G."/>
        </authorList>
    </citation>
    <scope>NUCLEOTIDE SEQUENCE [LARGE SCALE GENOMIC DNA]</scope>
    <source>
        <strain>ATCC 25618 / H37Rv</strain>
    </source>
</reference>
<reference key="2">
    <citation type="journal article" date="2011" name="Mol. Cell. Proteomics">
        <title>Proteogenomic analysis of Mycobacterium tuberculosis by high resolution mass spectrometry.</title>
        <authorList>
            <person name="Kelkar D.S."/>
            <person name="Kumar D."/>
            <person name="Kumar P."/>
            <person name="Balakrishnan L."/>
            <person name="Muthusamy B."/>
            <person name="Yadav A.K."/>
            <person name="Shrivastava P."/>
            <person name="Marimuthu A."/>
            <person name="Anand S."/>
            <person name="Sundaram H."/>
            <person name="Kingsbury R."/>
            <person name="Harsha H.C."/>
            <person name="Nair B."/>
            <person name="Prasad T.S."/>
            <person name="Chauhan D.S."/>
            <person name="Katoch K."/>
            <person name="Katoch V.M."/>
            <person name="Kumar P."/>
            <person name="Chaerkady R."/>
            <person name="Ramachandran S."/>
            <person name="Dash D."/>
            <person name="Pandey A."/>
        </authorList>
    </citation>
    <scope>IDENTIFICATION BY MASS SPECTROMETRY [LARGE SCALE ANALYSIS]</scope>
    <source>
        <strain>ATCC 25618 / H37Rv</strain>
    </source>
</reference>
<reference key="3">
    <citation type="journal article" date="2019" name="FASEB J.">
        <title>Mycobacterium tuberculosis type III-A CRISPR/Cas system crRNA and its maturation have atypical features.</title>
        <authorList>
            <person name="Wei W."/>
            <person name="Zhang S."/>
            <person name="Fleming J."/>
            <person name="Chen Y."/>
            <person name="Li Z."/>
            <person name="Fan S."/>
            <person name="Liu Y."/>
            <person name="Wang W."/>
            <person name="Wang T."/>
            <person name="Liu Y."/>
            <person name="Ren B."/>
            <person name="Wang M."/>
            <person name="Jiao J."/>
            <person name="Chen Y."/>
            <person name="Zhou Y."/>
            <person name="Zhou Y."/>
            <person name="Gu S."/>
            <person name="Zhang X."/>
            <person name="Wan L."/>
            <person name="Chen T."/>
            <person name="Zhou L."/>
            <person name="Chen Y."/>
            <person name="Zhang X.E."/>
            <person name="Li C."/>
            <person name="Zhang H."/>
            <person name="Bi L."/>
        </authorList>
    </citation>
    <scope>FUNCTION IN PLASMID RESISTANCE</scope>
    <scope>SUBUNIT</scope>
    <scope>DISRUPTION PHENOTYPE</scope>
    <source>
        <strain>H37Rv</strain>
    </source>
</reference>
<evidence type="ECO:0000250" key="1">
    <source>
        <dbReference type="UniProtKB" id="A0A0A7HGA1"/>
    </source>
</evidence>
<evidence type="ECO:0000269" key="2">
    <source>
    </source>
</evidence>
<evidence type="ECO:0000305" key="3"/>
<evidence type="ECO:0000305" key="4">
    <source>
    </source>
</evidence>
<feature type="chain" id="PRO_0000418227" description="CRISPR system Cms protein Csm4">
    <location>
        <begin position="1"/>
        <end position="302"/>
    </location>
</feature>
<name>CSM4_MYCTU</name>
<protein>
    <recommendedName>
        <fullName>CRISPR system Cms protein Csm4</fullName>
    </recommendedName>
    <alternativeName>
        <fullName>CRISPR type III-A associated RAMP protein Csm4</fullName>
    </alternativeName>
</protein>